<dbReference type="EMBL" id="AF148805">
    <property type="protein sequence ID" value="ABD28848.1"/>
    <property type="molecule type" value="Genomic_DNA"/>
</dbReference>
<dbReference type="RefSeq" id="YP_001129351.1">
    <property type="nucleotide sequence ID" value="NC_009333.1"/>
</dbReference>
<dbReference type="SMR" id="Q2HRD4"/>
<dbReference type="BioGRID" id="1776991">
    <property type="interactions" value="25"/>
</dbReference>
<dbReference type="GlyCosmos" id="Q2HRD4">
    <property type="glycosylation" value="14 sites, No reported glycans"/>
</dbReference>
<dbReference type="DNASU" id="4961488"/>
<dbReference type="GeneID" id="4961488"/>
<dbReference type="KEGG" id="vg:4961488"/>
<dbReference type="Proteomes" id="UP000000942">
    <property type="component" value="Segment"/>
</dbReference>
<dbReference type="GO" id="GO:0033644">
    <property type="term" value="C:host cell membrane"/>
    <property type="evidence" value="ECO:0007669"/>
    <property type="project" value="UniProtKB-SubCell"/>
</dbReference>
<dbReference type="GO" id="GO:0016020">
    <property type="term" value="C:membrane"/>
    <property type="evidence" value="ECO:0007669"/>
    <property type="project" value="UniProtKB-KW"/>
</dbReference>
<dbReference type="GO" id="GO:0055036">
    <property type="term" value="C:virion membrane"/>
    <property type="evidence" value="ECO:0007669"/>
    <property type="project" value="UniProtKB-SubCell"/>
</dbReference>
<dbReference type="GO" id="GO:0042784">
    <property type="term" value="P:symbiont-mediated suppression of host complement activation"/>
    <property type="evidence" value="ECO:0007669"/>
    <property type="project" value="UniProtKB-KW"/>
</dbReference>
<dbReference type="CDD" id="cd00033">
    <property type="entry name" value="CCP"/>
    <property type="match status" value="4"/>
</dbReference>
<dbReference type="FunFam" id="2.10.70.10:FF:000014">
    <property type="entry name" value="Membrane cofactor protein"/>
    <property type="match status" value="2"/>
</dbReference>
<dbReference type="Gene3D" id="2.10.70.10">
    <property type="entry name" value="Complement Module, domain 1"/>
    <property type="match status" value="4"/>
</dbReference>
<dbReference type="InterPro" id="IPR050350">
    <property type="entry name" value="Compl-Cell_Adhes-Reg"/>
</dbReference>
<dbReference type="InterPro" id="IPR035976">
    <property type="entry name" value="Sushi/SCR/CCP_sf"/>
</dbReference>
<dbReference type="InterPro" id="IPR000436">
    <property type="entry name" value="Sushi_SCR_CCP_dom"/>
</dbReference>
<dbReference type="PANTHER" id="PTHR19325:SF570">
    <property type="entry name" value="COMPLEMENT COMPONENT 4 BINDING PROTEIN, MEMBRANE"/>
    <property type="match status" value="1"/>
</dbReference>
<dbReference type="PANTHER" id="PTHR19325">
    <property type="entry name" value="COMPLEMENT COMPONENT-RELATED SUSHI DOMAIN-CONTAINING"/>
    <property type="match status" value="1"/>
</dbReference>
<dbReference type="Pfam" id="PF00084">
    <property type="entry name" value="Sushi"/>
    <property type="match status" value="4"/>
</dbReference>
<dbReference type="SMART" id="SM00032">
    <property type="entry name" value="CCP"/>
    <property type="match status" value="4"/>
</dbReference>
<dbReference type="SUPFAM" id="SSF57535">
    <property type="entry name" value="Complement control module/SCR domain"/>
    <property type="match status" value="4"/>
</dbReference>
<dbReference type="PROSITE" id="PS50923">
    <property type="entry name" value="SUSHI"/>
    <property type="match status" value="4"/>
</dbReference>
<feature type="signal peptide" evidence="1">
    <location>
        <begin position="1"/>
        <end position="19"/>
    </location>
</feature>
<feature type="chain" id="PRO_0000423837" description="Complement control protein">
    <location>
        <begin position="20"/>
        <end position="550"/>
    </location>
</feature>
<feature type="transmembrane region" description="Helical" evidence="1">
    <location>
        <begin position="528"/>
        <end position="548"/>
    </location>
</feature>
<feature type="domain" description="Sushi 1" evidence="2">
    <location>
        <begin position="23"/>
        <end position="83"/>
    </location>
</feature>
<feature type="domain" description="Sushi 2" evidence="2">
    <location>
        <begin position="84"/>
        <end position="150"/>
    </location>
</feature>
<feature type="domain" description="Sushi 3" evidence="2">
    <location>
        <begin position="151"/>
        <end position="209"/>
    </location>
</feature>
<feature type="domain" description="Sushi 4" evidence="2">
    <location>
        <begin position="210"/>
        <end position="268"/>
    </location>
</feature>
<feature type="region of interest" description="Disordered" evidence="3">
    <location>
        <begin position="269"/>
        <end position="338"/>
    </location>
</feature>
<feature type="region of interest" description="Disordered" evidence="3">
    <location>
        <begin position="387"/>
        <end position="408"/>
    </location>
</feature>
<feature type="region of interest" description="Disordered" evidence="3">
    <location>
        <begin position="420"/>
        <end position="516"/>
    </location>
</feature>
<feature type="compositionally biased region" description="Polar residues" evidence="3">
    <location>
        <begin position="288"/>
        <end position="302"/>
    </location>
</feature>
<feature type="compositionally biased region" description="Polar residues" evidence="3">
    <location>
        <begin position="312"/>
        <end position="321"/>
    </location>
</feature>
<feature type="compositionally biased region" description="Polar residues" evidence="3">
    <location>
        <begin position="424"/>
        <end position="440"/>
    </location>
</feature>
<feature type="compositionally biased region" description="Polar residues" evidence="3">
    <location>
        <begin position="450"/>
        <end position="476"/>
    </location>
</feature>
<feature type="compositionally biased region" description="Polar residues" evidence="3">
    <location>
        <begin position="484"/>
        <end position="495"/>
    </location>
</feature>
<feature type="glycosylation site" description="N-linked (GlcNAc...) asparagine; by host" evidence="1">
    <location>
        <position position="63"/>
    </location>
</feature>
<feature type="glycosylation site" description="N-linked (GlcNAc...) asparagine; by host" evidence="1">
    <location>
        <position position="111"/>
    </location>
</feature>
<feature type="glycosylation site" description="N-linked (GlcNAc...) asparagine; by host" evidence="1">
    <location>
        <position position="197"/>
    </location>
</feature>
<feature type="glycosylation site" description="N-linked (GlcNAc...) asparagine; by host" evidence="1">
    <location>
        <position position="255"/>
    </location>
</feature>
<feature type="glycosylation site" description="N-linked (GlcNAc...) asparagine; by host" evidence="1">
    <location>
        <position position="275"/>
    </location>
</feature>
<feature type="glycosylation site" description="N-linked (GlcNAc...) asparagine; by host" evidence="1">
    <location>
        <position position="299"/>
    </location>
</feature>
<feature type="glycosylation site" description="N-linked (GlcNAc...) asparagine; by host" evidence="1">
    <location>
        <position position="334"/>
    </location>
</feature>
<feature type="glycosylation site" description="N-linked (GlcNAc...) asparagine; by host" evidence="1">
    <location>
        <position position="371"/>
    </location>
</feature>
<feature type="glycosylation site" description="N-linked (GlcNAc...) asparagine; by host" evidence="1">
    <location>
        <position position="374"/>
    </location>
</feature>
<feature type="glycosylation site" description="N-linked (GlcNAc...) asparagine; by host" evidence="1">
    <location>
        <position position="378"/>
    </location>
</feature>
<feature type="glycosylation site" description="N-linked (GlcNAc...) asparagine; by host" evidence="1">
    <location>
        <position position="426"/>
    </location>
</feature>
<feature type="glycosylation site" description="N-linked (GlcNAc...) asparagine; by host" evidence="1">
    <location>
        <position position="445"/>
    </location>
</feature>
<feature type="glycosylation site" description="N-linked (GlcNAc...) asparagine; by host" evidence="1">
    <location>
        <position position="455"/>
    </location>
</feature>
<feature type="glycosylation site" description="N-linked (GlcNAc...) asparagine; by host" evidence="1">
    <location>
        <position position="483"/>
    </location>
</feature>
<feature type="disulfide bond" evidence="2">
    <location>
        <begin position="25"/>
        <end position="68"/>
    </location>
</feature>
<feature type="disulfide bond" evidence="2">
    <location>
        <begin position="53"/>
        <end position="81"/>
    </location>
</feature>
<feature type="disulfide bond" evidence="2">
    <location>
        <begin position="86"/>
        <end position="131"/>
    </location>
</feature>
<feature type="disulfide bond" evidence="2">
    <location>
        <begin position="116"/>
        <end position="148"/>
    </location>
</feature>
<feature type="disulfide bond" evidence="2">
    <location>
        <begin position="153"/>
        <end position="194"/>
    </location>
</feature>
<feature type="disulfide bond" evidence="2">
    <location>
        <begin position="180"/>
        <end position="207"/>
    </location>
</feature>
<feature type="disulfide bond" evidence="2">
    <location>
        <begin position="212"/>
        <end position="254"/>
    </location>
</feature>
<feature type="disulfide bond" evidence="2">
    <location>
        <begin position="240"/>
        <end position="266"/>
    </location>
</feature>
<organism>
    <name type="scientific">Human herpesvirus 8 type P (isolate GK18)</name>
    <name type="common">HHV-8</name>
    <name type="synonym">Kaposi's sarcoma-associated herpesvirus</name>
    <dbReference type="NCBI Taxonomy" id="868565"/>
    <lineage>
        <taxon>Viruses</taxon>
        <taxon>Duplodnaviria</taxon>
        <taxon>Heunggongvirae</taxon>
        <taxon>Peploviricota</taxon>
        <taxon>Herviviricetes</taxon>
        <taxon>Herpesvirales</taxon>
        <taxon>Orthoherpesviridae</taxon>
        <taxon>Gammaherpesvirinae</taxon>
        <taxon>Rhadinovirus</taxon>
        <taxon>Rhadinovirus humangamma8</taxon>
        <taxon>Human herpesvirus 8</taxon>
    </lineage>
</organism>
<organismHost>
    <name type="scientific">Homo sapiens</name>
    <name type="common">Human</name>
    <dbReference type="NCBI Taxonomy" id="9606"/>
</organismHost>
<gene>
    <name type="primary">ORF4</name>
</gene>
<evidence type="ECO:0000255" key="1"/>
<evidence type="ECO:0000255" key="2">
    <source>
        <dbReference type="PROSITE-ProRule" id="PRU00302"/>
    </source>
</evidence>
<evidence type="ECO:0000256" key="3">
    <source>
        <dbReference type="SAM" id="MobiDB-lite"/>
    </source>
</evidence>
<evidence type="ECO:0000269" key="4">
    <source>
    </source>
</evidence>
<evidence type="ECO:0000269" key="5">
    <source>
    </source>
</evidence>
<evidence type="ECO:0000269" key="6">
    <source>
    </source>
</evidence>
<evidence type="ECO:0000305" key="7"/>
<proteinExistence type="inferred from homology"/>
<accession>Q2HRD4</accession>
<accession>D0UZL0</accession>
<reference key="1">
    <citation type="journal article" date="1999" name="J. Virol.">
        <title>Identification of a spliced gene from Kaposi's sarcoma-associated herpesvirus encoding a protein with similarities to latent membrane proteins 1 and 2A of Epstein-Barr virus.</title>
        <authorList>
            <person name="Glenn M."/>
            <person name="Rainbow L."/>
            <person name="Aurade F."/>
            <person name="Davison A."/>
            <person name="Schulz T.F."/>
        </authorList>
    </citation>
    <scope>NUCLEOTIDE SEQUENCE [LARGE SCALE GENOMIC DNA]</scope>
</reference>
<reference key="2">
    <citation type="journal article" date="2006" name="J. Gen. Virol.">
        <title>Kaposi's sarcoma-associated herpesvirus immune modulation: an overview.</title>
        <authorList>
            <person name="Rezaee S.A.R."/>
            <person name="Cunningham C."/>
            <person name="Davison A.J."/>
            <person name="Blackbourn D.J."/>
        </authorList>
    </citation>
    <scope>NUCLEOTIDE SEQUENCE [LARGE SCALE GENOMIC DNA]</scope>
</reference>
<reference key="3">
    <citation type="journal article" date="2003" name="J. Virol.">
        <title>Complement regulation by Kaposi's sarcoma-associated herpesvirus ORF4 protein.</title>
        <authorList>
            <person name="Spiller O.B."/>
            <person name="Robinson M."/>
            <person name="O'Donnell E."/>
            <person name="Milligan S."/>
            <person name="Morgan B.P."/>
            <person name="Davison A.J."/>
            <person name="Blackbourn D.J."/>
        </authorList>
    </citation>
    <scope>FUNCTION</scope>
</reference>
<reference key="4">
    <citation type="journal article" date="2004" name="J. Biol. Chem.">
        <title>The Kaposi's sarcoma-associated herpesvirus complement control protein mimics human molecular mechanisms for inhibition of the complement system.</title>
        <authorList>
            <person name="Mark L."/>
            <person name="Lee W.H."/>
            <person name="Spiller O.B."/>
            <person name="Proctor D."/>
            <person name="Blackbourn D.J."/>
            <person name="Villoutreix B.O."/>
            <person name="Blom A.M."/>
        </authorList>
    </citation>
    <scope>FUNCTION</scope>
</reference>
<reference key="5">
    <citation type="journal article" date="2006" name="J. Virol.">
        <title>Dissecting the regions of virion-associated Kaposi's sarcoma-associated herpesvirus complement control protein required for complement regulation and cell binding.</title>
        <authorList>
            <person name="Spiller O.B."/>
            <person name="Mark L."/>
            <person name="Blue C.E."/>
            <person name="Proctor D.G."/>
            <person name="Aitken J.A."/>
            <person name="Blom A.M."/>
            <person name="Blackbourn D.J."/>
        </authorList>
    </citation>
    <scope>SUBCELLULAR LOCATION</scope>
    <scope>FUNCTION</scope>
</reference>
<name>ORF4_HHV8P</name>
<sequence length="550" mass="60661">MAFLRQTLWILWTFTMVIGQDNEKCSQKTLIGYRLKMSRDGDIAVGETVELRCRSGYTTYARNITATCLQGGTWSEPTATCNKKSCPNPGEIQNGKVIFHGGQDALKYGANISYVCNEGYFLVGREYVRYCMIGASGQMAWSSSPPFCEKEKCHRPKIENGDFKPDKDYYEYNDAVHFECNEGYTLVGPHSIACAVNNTWTSNMPTCELAGCKFPSVTHGYPIQGFSLTYKHKQSVTFACNDGFVLRGSPTITCNVTEWDPPLPKCVLEDIDDPNNSNPGRLHPTPNEKPNGNVFQRSNYTEPPTKPEDTHTAATCDTNCEQPPKILPTSEGFNETTTSNTITKQLEDEKTTSQPNTHITSALTSMKAKGNFTNKTNNSTDLHIASTPTSQDDATPSIPSVQTPNYNTNAPTRTLTSLHIEEGPSNSTTSEKATASTLSHNSHKNDTGGIYTTLNKTTQLPSTNKPTNSQAKSSTKPRVETHNKTTSNPAISLTDSADVPQRPREPTLPPIFRPPASKNRYLEKQLVIGLLTAVALTCGLITLFHYLFFR</sequence>
<protein>
    <recommendedName>
        <fullName>Complement control protein</fullName>
        <shortName>KCP</shortName>
    </recommendedName>
</protein>
<comment type="function">
    <text evidence="4 5 6">Inhibits the complement component of the host innate immune response. Regulates host C3 convertases, accelerating their decay, and acts as a cofactor for factor I degradation of C4b and C3b. Also binds heparin, and therefore may play two distinct roles when incorporated in virion membranes: immune evasion and host cell binding.</text>
</comment>
<comment type="subcellular location">
    <subcellularLocation>
        <location evidence="7">Host membrane</location>
        <topology evidence="7">Single-pass type I membrane protein</topology>
    </subcellularLocation>
    <subcellularLocation>
        <location evidence="6">Virion membrane</location>
    </subcellularLocation>
</comment>
<keyword id="KW-1015">Disulfide bond</keyword>
<keyword id="KW-0325">Glycoprotein</keyword>
<keyword id="KW-1043">Host membrane</keyword>
<keyword id="KW-0945">Host-virus interaction</keyword>
<keyword id="KW-1087">Inhibition of host complement factors by virus</keyword>
<keyword id="KW-0472">Membrane</keyword>
<keyword id="KW-1185">Reference proteome</keyword>
<keyword id="KW-0677">Repeat</keyword>
<keyword id="KW-0732">Signal</keyword>
<keyword id="KW-0768">Sushi</keyword>
<keyword id="KW-0812">Transmembrane</keyword>
<keyword id="KW-1133">Transmembrane helix</keyword>
<keyword id="KW-0899">Viral immunoevasion</keyword>
<keyword id="KW-0946">Virion</keyword>